<comment type="function">
    <text evidence="1">This protein is involved in the repair of mismatches in DNA. It is required for dam-dependent methyl-directed DNA mismatch repair. May act as a 'molecular matchmaker', a protein that promotes the formation of a stable complex between two or more DNA-binding proteins in an ATP-dependent manner without itself being part of a final effector complex.</text>
</comment>
<comment type="similarity">
    <text evidence="1">Belongs to the DNA mismatch repair MutL/HexB family.</text>
</comment>
<gene>
    <name evidence="1" type="primary">mutL</name>
    <name type="ordered locus">Asuc_0989</name>
</gene>
<dbReference type="EMBL" id="CP000746">
    <property type="protein sequence ID" value="ABR74357.1"/>
    <property type="molecule type" value="Genomic_DNA"/>
</dbReference>
<dbReference type="RefSeq" id="WP_012072734.1">
    <property type="nucleotide sequence ID" value="NC_009655.1"/>
</dbReference>
<dbReference type="SMR" id="A6VN10"/>
<dbReference type="STRING" id="339671.Asuc_0989"/>
<dbReference type="KEGG" id="asu:Asuc_0989"/>
<dbReference type="eggNOG" id="COG0323">
    <property type="taxonomic scope" value="Bacteria"/>
</dbReference>
<dbReference type="HOGENOM" id="CLU_004131_5_1_6"/>
<dbReference type="OrthoDB" id="9763467at2"/>
<dbReference type="Proteomes" id="UP000001114">
    <property type="component" value="Chromosome"/>
</dbReference>
<dbReference type="GO" id="GO:0032300">
    <property type="term" value="C:mismatch repair complex"/>
    <property type="evidence" value="ECO:0007669"/>
    <property type="project" value="InterPro"/>
</dbReference>
<dbReference type="GO" id="GO:0005524">
    <property type="term" value="F:ATP binding"/>
    <property type="evidence" value="ECO:0007669"/>
    <property type="project" value="InterPro"/>
</dbReference>
<dbReference type="GO" id="GO:0016887">
    <property type="term" value="F:ATP hydrolysis activity"/>
    <property type="evidence" value="ECO:0007669"/>
    <property type="project" value="InterPro"/>
</dbReference>
<dbReference type="GO" id="GO:0140664">
    <property type="term" value="F:ATP-dependent DNA damage sensor activity"/>
    <property type="evidence" value="ECO:0007669"/>
    <property type="project" value="InterPro"/>
</dbReference>
<dbReference type="GO" id="GO:0030983">
    <property type="term" value="F:mismatched DNA binding"/>
    <property type="evidence" value="ECO:0007669"/>
    <property type="project" value="InterPro"/>
</dbReference>
<dbReference type="GO" id="GO:0006298">
    <property type="term" value="P:mismatch repair"/>
    <property type="evidence" value="ECO:0007669"/>
    <property type="project" value="UniProtKB-UniRule"/>
</dbReference>
<dbReference type="CDD" id="cd16926">
    <property type="entry name" value="HATPase_MutL-MLH-PMS-like"/>
    <property type="match status" value="1"/>
</dbReference>
<dbReference type="CDD" id="cd03482">
    <property type="entry name" value="MutL_Trans_MutL"/>
    <property type="match status" value="1"/>
</dbReference>
<dbReference type="FunFam" id="3.30.230.10:FF:000013">
    <property type="entry name" value="DNA mismatch repair endonuclease MutL"/>
    <property type="match status" value="1"/>
</dbReference>
<dbReference type="FunFam" id="3.30.565.10:FF:000003">
    <property type="entry name" value="DNA mismatch repair endonuclease MutL"/>
    <property type="match status" value="1"/>
</dbReference>
<dbReference type="Gene3D" id="3.30.230.10">
    <property type="match status" value="1"/>
</dbReference>
<dbReference type="Gene3D" id="3.30.565.10">
    <property type="entry name" value="Histidine kinase-like ATPase, C-terminal domain"/>
    <property type="match status" value="1"/>
</dbReference>
<dbReference type="Gene3D" id="3.30.1540.20">
    <property type="entry name" value="MutL, C-terminal domain, dimerisation subdomain"/>
    <property type="match status" value="1"/>
</dbReference>
<dbReference type="Gene3D" id="3.30.1370.100">
    <property type="entry name" value="MutL, C-terminal domain, regulatory subdomain"/>
    <property type="match status" value="1"/>
</dbReference>
<dbReference type="HAMAP" id="MF_00149">
    <property type="entry name" value="DNA_mis_repair"/>
    <property type="match status" value="1"/>
</dbReference>
<dbReference type="InterPro" id="IPR014762">
    <property type="entry name" value="DNA_mismatch_repair_CS"/>
</dbReference>
<dbReference type="InterPro" id="IPR020667">
    <property type="entry name" value="DNA_mismatch_repair_MutL"/>
</dbReference>
<dbReference type="InterPro" id="IPR013507">
    <property type="entry name" value="DNA_mismatch_S5_2-like"/>
</dbReference>
<dbReference type="InterPro" id="IPR036890">
    <property type="entry name" value="HATPase_C_sf"/>
</dbReference>
<dbReference type="InterPro" id="IPR002099">
    <property type="entry name" value="MutL/Mlh/PMS"/>
</dbReference>
<dbReference type="InterPro" id="IPR038973">
    <property type="entry name" value="MutL/Mlh/Pms-like"/>
</dbReference>
<dbReference type="InterPro" id="IPR014790">
    <property type="entry name" value="MutL_C"/>
</dbReference>
<dbReference type="InterPro" id="IPR042120">
    <property type="entry name" value="MutL_C_dimsub"/>
</dbReference>
<dbReference type="InterPro" id="IPR042121">
    <property type="entry name" value="MutL_C_regsub"/>
</dbReference>
<dbReference type="InterPro" id="IPR037198">
    <property type="entry name" value="MutL_C_sf"/>
</dbReference>
<dbReference type="InterPro" id="IPR020568">
    <property type="entry name" value="Ribosomal_Su5_D2-typ_SF"/>
</dbReference>
<dbReference type="InterPro" id="IPR014721">
    <property type="entry name" value="Ribsml_uS5_D2-typ_fold_subgr"/>
</dbReference>
<dbReference type="NCBIfam" id="TIGR00585">
    <property type="entry name" value="mutl"/>
    <property type="match status" value="1"/>
</dbReference>
<dbReference type="NCBIfam" id="NF000948">
    <property type="entry name" value="PRK00095.1-1"/>
    <property type="match status" value="1"/>
</dbReference>
<dbReference type="PANTHER" id="PTHR10073">
    <property type="entry name" value="DNA MISMATCH REPAIR PROTEIN MLH, PMS, MUTL"/>
    <property type="match status" value="1"/>
</dbReference>
<dbReference type="PANTHER" id="PTHR10073:SF12">
    <property type="entry name" value="DNA MISMATCH REPAIR PROTEIN MLH1"/>
    <property type="match status" value="1"/>
</dbReference>
<dbReference type="Pfam" id="PF01119">
    <property type="entry name" value="DNA_mis_repair"/>
    <property type="match status" value="1"/>
</dbReference>
<dbReference type="Pfam" id="PF13589">
    <property type="entry name" value="HATPase_c_3"/>
    <property type="match status" value="1"/>
</dbReference>
<dbReference type="Pfam" id="PF08676">
    <property type="entry name" value="MutL_C"/>
    <property type="match status" value="1"/>
</dbReference>
<dbReference type="SMART" id="SM01340">
    <property type="entry name" value="DNA_mis_repair"/>
    <property type="match status" value="1"/>
</dbReference>
<dbReference type="SMART" id="SM00853">
    <property type="entry name" value="MutL_C"/>
    <property type="match status" value="1"/>
</dbReference>
<dbReference type="SUPFAM" id="SSF55874">
    <property type="entry name" value="ATPase domain of HSP90 chaperone/DNA topoisomerase II/histidine kinase"/>
    <property type="match status" value="1"/>
</dbReference>
<dbReference type="SUPFAM" id="SSF118116">
    <property type="entry name" value="DNA mismatch repair protein MutL"/>
    <property type="match status" value="1"/>
</dbReference>
<dbReference type="SUPFAM" id="SSF54211">
    <property type="entry name" value="Ribosomal protein S5 domain 2-like"/>
    <property type="match status" value="1"/>
</dbReference>
<dbReference type="PROSITE" id="PS00058">
    <property type="entry name" value="DNA_MISMATCH_REPAIR_1"/>
    <property type="match status" value="1"/>
</dbReference>
<name>MUTL_ACTSZ</name>
<sequence length="637" mass="71698">MPIQILPPQLANQIAAGEVVERPASVVKELVENSLDAGATRIQIDIENGGATLIRIRDNGFGIPKEELSLALARHATSKIATIDDLEAILSFGFRGEALASISSVSRLTLTSRTADQQEAWQVFVQGREQESTVNPASHPVGTTVEVANLFFNMPARRKFLRTDKTEFGHIDEVIRRIALAKSHIAFTLTHNGKIVRQYKSAVEDTQKLKRLAAICGNDFVRQALYIDWKHDNLHLSGWVTTPTFARQQNDLSYCYVNGRMVKDKVINHAIRQAYAEHLGSERYPAFVLFLDLNPNDVDVNVHPTKHEVRFQQSRLIHDFIFQGVTNALLSAEQFDFSASTESEKNNEIREPQADYQNVTPTIRPNRAAAGQNMFELNSPTQTKQTNVPITTKAYPTPAHSGQAGYSTTPSNPPPHFMPQSARSVSPFEREKVTKTEQRIYAELLKTPEVEAPPTSIQSSLLSSSSLLHAVALVNNQALLLQRDTAFYLLPLNKLQKMRLELLLTLPNTPQQMLLIPVVFRLSDKQQAQWRQQKIWFEQSGFEFIENPVQHRITLNAVPQCLRHQNLQKIVIALLNRSLQKTEKFLTALLDLVELPDCQVLANAVNILQETELLLDQQTTMKLDNLLIPIDFSSYLS</sequence>
<organism>
    <name type="scientific">Actinobacillus succinogenes (strain ATCC 55618 / DSM 22257 / CCUG 43843 / 130Z)</name>
    <dbReference type="NCBI Taxonomy" id="339671"/>
    <lineage>
        <taxon>Bacteria</taxon>
        <taxon>Pseudomonadati</taxon>
        <taxon>Pseudomonadota</taxon>
        <taxon>Gammaproteobacteria</taxon>
        <taxon>Pasteurellales</taxon>
        <taxon>Pasteurellaceae</taxon>
        <taxon>Actinobacillus</taxon>
    </lineage>
</organism>
<keyword id="KW-0227">DNA damage</keyword>
<keyword id="KW-0234">DNA repair</keyword>
<keyword id="KW-1185">Reference proteome</keyword>
<proteinExistence type="inferred from homology"/>
<reference key="1">
    <citation type="journal article" date="2010" name="BMC Genomics">
        <title>A genomic perspective on the potential of Actinobacillus succinogenes for industrial succinate production.</title>
        <authorList>
            <person name="McKinlay J.B."/>
            <person name="Laivenieks M."/>
            <person name="Schindler B.D."/>
            <person name="McKinlay A.A."/>
            <person name="Siddaramappa S."/>
            <person name="Challacombe J.F."/>
            <person name="Lowry S.R."/>
            <person name="Clum A."/>
            <person name="Lapidus A.L."/>
            <person name="Burkhart K.B."/>
            <person name="Harkins V."/>
            <person name="Vieille C."/>
        </authorList>
    </citation>
    <scope>NUCLEOTIDE SEQUENCE [LARGE SCALE GENOMIC DNA]</scope>
    <source>
        <strain>ATCC 55618 / DSM 22257 / CCUG 43843 / 130Z</strain>
    </source>
</reference>
<accession>A6VN10</accession>
<evidence type="ECO:0000255" key="1">
    <source>
        <dbReference type="HAMAP-Rule" id="MF_00149"/>
    </source>
</evidence>
<protein>
    <recommendedName>
        <fullName evidence="1">DNA mismatch repair protein MutL</fullName>
    </recommendedName>
</protein>
<feature type="chain" id="PRO_1000071502" description="DNA mismatch repair protein MutL">
    <location>
        <begin position="1"/>
        <end position="637"/>
    </location>
</feature>